<organism>
    <name type="scientific">Shewanella amazonensis (strain ATCC BAA-1098 / SB2B)</name>
    <dbReference type="NCBI Taxonomy" id="326297"/>
    <lineage>
        <taxon>Bacteria</taxon>
        <taxon>Pseudomonadati</taxon>
        <taxon>Pseudomonadota</taxon>
        <taxon>Gammaproteobacteria</taxon>
        <taxon>Alteromonadales</taxon>
        <taxon>Shewanellaceae</taxon>
        <taxon>Shewanella</taxon>
    </lineage>
</organism>
<dbReference type="EC" id="2.1.1.186" evidence="1"/>
<dbReference type="EMBL" id="CP000507">
    <property type="protein sequence ID" value="ABM00631.1"/>
    <property type="molecule type" value="Genomic_DNA"/>
</dbReference>
<dbReference type="RefSeq" id="WP_011760537.1">
    <property type="nucleotide sequence ID" value="NC_008700.1"/>
</dbReference>
<dbReference type="SMR" id="A1S8C4"/>
<dbReference type="STRING" id="326297.Sama_2426"/>
<dbReference type="KEGG" id="saz:Sama_2426"/>
<dbReference type="eggNOG" id="COG2933">
    <property type="taxonomic scope" value="Bacteria"/>
</dbReference>
<dbReference type="HOGENOM" id="CLU_043780_0_0_6"/>
<dbReference type="OrthoDB" id="154490at2"/>
<dbReference type="Proteomes" id="UP000009175">
    <property type="component" value="Chromosome"/>
</dbReference>
<dbReference type="GO" id="GO:0005737">
    <property type="term" value="C:cytoplasm"/>
    <property type="evidence" value="ECO:0007669"/>
    <property type="project" value="UniProtKB-SubCell"/>
</dbReference>
<dbReference type="GO" id="GO:0008757">
    <property type="term" value="F:S-adenosylmethionine-dependent methyltransferase activity"/>
    <property type="evidence" value="ECO:0007669"/>
    <property type="project" value="UniProtKB-UniRule"/>
</dbReference>
<dbReference type="GO" id="GO:0032259">
    <property type="term" value="P:methylation"/>
    <property type="evidence" value="ECO:0007669"/>
    <property type="project" value="UniProtKB-KW"/>
</dbReference>
<dbReference type="GO" id="GO:0006364">
    <property type="term" value="P:rRNA processing"/>
    <property type="evidence" value="ECO:0007669"/>
    <property type="project" value="UniProtKB-UniRule"/>
</dbReference>
<dbReference type="Gene3D" id="3.30.2300.20">
    <property type="match status" value="1"/>
</dbReference>
<dbReference type="Gene3D" id="3.30.70.2810">
    <property type="match status" value="1"/>
</dbReference>
<dbReference type="Gene3D" id="3.40.50.150">
    <property type="entry name" value="Vaccinia Virus protein VP39"/>
    <property type="match status" value="1"/>
</dbReference>
<dbReference type="HAMAP" id="MF_01551">
    <property type="entry name" value="23SrRNA_methyltr_M"/>
    <property type="match status" value="1"/>
</dbReference>
<dbReference type="InterPro" id="IPR040739">
    <property type="entry name" value="RlmM_FDX"/>
</dbReference>
<dbReference type="InterPro" id="IPR048646">
    <property type="entry name" value="RlmM_THUMP-like"/>
</dbReference>
<dbReference type="InterPro" id="IPR002877">
    <property type="entry name" value="RNA_MeTrfase_FtsJ_dom"/>
</dbReference>
<dbReference type="InterPro" id="IPR011224">
    <property type="entry name" value="rRNA_MeTrfase_M"/>
</dbReference>
<dbReference type="InterPro" id="IPR029063">
    <property type="entry name" value="SAM-dependent_MTases_sf"/>
</dbReference>
<dbReference type="NCBIfam" id="NF008734">
    <property type="entry name" value="PRK11760.1"/>
    <property type="match status" value="1"/>
</dbReference>
<dbReference type="PANTHER" id="PTHR37524">
    <property type="entry name" value="RIBOSOMAL RNA LARGE SUBUNIT METHYLTRANSFERASE M"/>
    <property type="match status" value="1"/>
</dbReference>
<dbReference type="PANTHER" id="PTHR37524:SF2">
    <property type="entry name" value="RIBOSOMAL RNA METHYLTRANSFERASE FTSJ DOMAIN-CONTAINING PROTEIN"/>
    <property type="match status" value="1"/>
</dbReference>
<dbReference type="Pfam" id="PF01728">
    <property type="entry name" value="FtsJ"/>
    <property type="match status" value="1"/>
</dbReference>
<dbReference type="Pfam" id="PF18125">
    <property type="entry name" value="RlmM_FDX"/>
    <property type="match status" value="1"/>
</dbReference>
<dbReference type="Pfam" id="PF21239">
    <property type="entry name" value="RLMM_N"/>
    <property type="match status" value="1"/>
</dbReference>
<dbReference type="PIRSF" id="PIRSF028774">
    <property type="entry name" value="UCP028774"/>
    <property type="match status" value="1"/>
</dbReference>
<dbReference type="SUPFAM" id="SSF53335">
    <property type="entry name" value="S-adenosyl-L-methionine-dependent methyltransferases"/>
    <property type="match status" value="1"/>
</dbReference>
<protein>
    <recommendedName>
        <fullName evidence="1">Ribosomal RNA large subunit methyltransferase M</fullName>
        <ecNumber evidence="1">2.1.1.186</ecNumber>
    </recommendedName>
    <alternativeName>
        <fullName evidence="1">23S rRNA (cytidine2498-2'-O)-methyltransferase</fullName>
    </alternativeName>
    <alternativeName>
        <fullName evidence="1">23S rRNA 2'-O-ribose methyltransferase RlmM</fullName>
    </alternativeName>
</protein>
<evidence type="ECO:0000255" key="1">
    <source>
        <dbReference type="HAMAP-Rule" id="MF_01551"/>
    </source>
</evidence>
<comment type="function">
    <text evidence="1">Catalyzes the 2'-O-methylation at nucleotide C2498 in 23S rRNA.</text>
</comment>
<comment type="catalytic activity">
    <reaction evidence="1">
        <text>cytidine(2498) in 23S rRNA + S-adenosyl-L-methionine = 2'-O-methylcytidine(2498) in 23S rRNA + S-adenosyl-L-homocysteine + H(+)</text>
        <dbReference type="Rhea" id="RHEA:42788"/>
        <dbReference type="Rhea" id="RHEA-COMP:10244"/>
        <dbReference type="Rhea" id="RHEA-COMP:10245"/>
        <dbReference type="ChEBI" id="CHEBI:15378"/>
        <dbReference type="ChEBI" id="CHEBI:57856"/>
        <dbReference type="ChEBI" id="CHEBI:59789"/>
        <dbReference type="ChEBI" id="CHEBI:74495"/>
        <dbReference type="ChEBI" id="CHEBI:82748"/>
        <dbReference type="EC" id="2.1.1.186"/>
    </reaction>
</comment>
<comment type="subunit">
    <text evidence="1">Monomer.</text>
</comment>
<comment type="subcellular location">
    <subcellularLocation>
        <location evidence="1">Cytoplasm</location>
    </subcellularLocation>
</comment>
<comment type="similarity">
    <text evidence="1">Belongs to the class I-like SAM-binding methyltransferase superfamily. RNA methyltransferase RlmE family. RlmM subfamily.</text>
</comment>
<gene>
    <name evidence="1" type="primary">rlmM</name>
    <name type="ordered locus">Sama_2426</name>
</gene>
<reference key="1">
    <citation type="submission" date="2006-12" db="EMBL/GenBank/DDBJ databases">
        <title>Complete sequence of Shewanella amazonensis SB2B.</title>
        <authorList>
            <consortium name="US DOE Joint Genome Institute"/>
            <person name="Copeland A."/>
            <person name="Lucas S."/>
            <person name="Lapidus A."/>
            <person name="Barry K."/>
            <person name="Detter J.C."/>
            <person name="Glavina del Rio T."/>
            <person name="Hammon N."/>
            <person name="Israni S."/>
            <person name="Dalin E."/>
            <person name="Tice H."/>
            <person name="Pitluck S."/>
            <person name="Munk A.C."/>
            <person name="Brettin T."/>
            <person name="Bruce D."/>
            <person name="Han C."/>
            <person name="Tapia R."/>
            <person name="Gilna P."/>
            <person name="Schmutz J."/>
            <person name="Larimer F."/>
            <person name="Land M."/>
            <person name="Hauser L."/>
            <person name="Kyrpides N."/>
            <person name="Mikhailova N."/>
            <person name="Fredrickson J."/>
            <person name="Richardson P."/>
        </authorList>
    </citation>
    <scope>NUCLEOTIDE SEQUENCE [LARGE SCALE GENOMIC DNA]</scope>
    <source>
        <strain>ATCC BAA-1098 / SB2B</strain>
    </source>
</reference>
<accession>A1S8C4</accession>
<keyword id="KW-0963">Cytoplasm</keyword>
<keyword id="KW-0489">Methyltransferase</keyword>
<keyword id="KW-1185">Reference proteome</keyword>
<keyword id="KW-0698">rRNA processing</keyword>
<keyword id="KW-0949">S-adenosyl-L-methionine</keyword>
<keyword id="KW-0808">Transferase</keyword>
<name>RLMM_SHEAM</name>
<proteinExistence type="inferred from homology"/>
<sequence>MKNLFLYCRAGYEKDCAAEIQQRAAELGIGGFVKANRDDAYVVFQGFSPDDGDRLAKELPLDSLIFARQMFACGDLLDDFSPEDRVTPIAESLTEVERAGELRVETPDTNEAKELSAFCRKFTVPLRQALKKRGVLLDKESSRRPIVHVCFVAPNKAFTGYSLSNNSSPHFMGIPRLKFPADAPSRSTLKLDEAFIHFIPREEHETRLRSGLNAVDLGACPGGWTYQLVRRGMMVHAIDNGPMNHDLMETGQVTHHRADGFKFEPARRNIYWLVCDMVEKPARVAELMEYWAIQGWFKEAIFNLKLPMKSRYKEVSQILANMHAILKENGIHEFHLACKHLYHDRDEVTVHLWLRPSSPWI</sequence>
<feature type="chain" id="PRO_0000314533" description="Ribosomal RNA large subunit methyltransferase M">
    <location>
        <begin position="1"/>
        <end position="361"/>
    </location>
</feature>
<feature type="active site" description="Proton acceptor" evidence="1">
    <location>
        <position position="305"/>
    </location>
</feature>
<feature type="binding site" evidence="1">
    <location>
        <position position="187"/>
    </location>
    <ligand>
        <name>S-adenosyl-L-methionine</name>
        <dbReference type="ChEBI" id="CHEBI:59789"/>
    </ligand>
</feature>
<feature type="binding site" evidence="1">
    <location>
        <begin position="220"/>
        <end position="223"/>
    </location>
    <ligand>
        <name>S-adenosyl-L-methionine</name>
        <dbReference type="ChEBI" id="CHEBI:59789"/>
    </ligand>
</feature>
<feature type="binding site" evidence="1">
    <location>
        <position position="239"/>
    </location>
    <ligand>
        <name>S-adenosyl-L-methionine</name>
        <dbReference type="ChEBI" id="CHEBI:59789"/>
    </ligand>
</feature>
<feature type="binding site" evidence="1">
    <location>
        <position position="259"/>
    </location>
    <ligand>
        <name>S-adenosyl-L-methionine</name>
        <dbReference type="ChEBI" id="CHEBI:59789"/>
    </ligand>
</feature>
<feature type="binding site" evidence="1">
    <location>
        <position position="276"/>
    </location>
    <ligand>
        <name>S-adenosyl-L-methionine</name>
        <dbReference type="ChEBI" id="CHEBI:59789"/>
    </ligand>
</feature>